<reference key="1">
    <citation type="journal article" date="1994" name="Nature">
        <title>2.2 Mb of contiguous nucleotide sequence from chromosome III of C. elegans.</title>
        <authorList>
            <person name="Wilson R."/>
            <person name="Ainscough R."/>
            <person name="Anderson K."/>
            <person name="Baynes C."/>
            <person name="Berks M."/>
            <person name="Bonfield J."/>
            <person name="Burton J."/>
            <person name="Connell M."/>
            <person name="Copsey T."/>
            <person name="Cooper J."/>
            <person name="Coulson A."/>
            <person name="Craxton M."/>
            <person name="Dear S."/>
            <person name="Du Z."/>
            <person name="Durbin R."/>
            <person name="Favello A."/>
            <person name="Fraser A."/>
            <person name="Fulton L."/>
            <person name="Gardner A."/>
            <person name="Green P."/>
            <person name="Hawkins T."/>
            <person name="Hillier L."/>
            <person name="Jier M."/>
            <person name="Johnston L."/>
            <person name="Jones M."/>
            <person name="Kershaw J."/>
            <person name="Kirsten J."/>
            <person name="Laisster N."/>
            <person name="Latreille P."/>
            <person name="Lightning J."/>
            <person name="Lloyd C."/>
            <person name="Mortimore B."/>
            <person name="O'Callaghan M."/>
            <person name="Parsons J."/>
            <person name="Percy C."/>
            <person name="Rifken L."/>
            <person name="Roopra A."/>
            <person name="Saunders D."/>
            <person name="Shownkeen R."/>
            <person name="Sims M."/>
            <person name="Smaldon N."/>
            <person name="Smith A."/>
            <person name="Smith M."/>
            <person name="Sonnhammer E."/>
            <person name="Staden R."/>
            <person name="Sulston J."/>
            <person name="Thierry-Mieg J."/>
            <person name="Thomas K."/>
            <person name="Vaudin M."/>
            <person name="Vaughan K."/>
            <person name="Waterston R."/>
            <person name="Watson A."/>
            <person name="Weinstock L."/>
            <person name="Wilkinson-Sproat J."/>
            <person name="Wohldman P."/>
        </authorList>
    </citation>
    <scope>NUCLEOTIDE SEQUENCE [LARGE SCALE GENOMIC DNA]</scope>
    <source>
        <strain>Bristol N2</strain>
    </source>
</reference>
<reference key="2">
    <citation type="journal article" date="1998" name="Science">
        <title>Genome sequence of the nematode C. elegans: a platform for investigating biology.</title>
        <authorList>
            <consortium name="The C. elegans sequencing consortium"/>
        </authorList>
    </citation>
    <scope>NUCLEOTIDE SEQUENCE [LARGE SCALE GENOMIC DNA]</scope>
    <source>
        <strain>Bristol N2</strain>
    </source>
</reference>
<dbReference type="EMBL" id="FO080308">
    <property type="protein sequence ID" value="CCD62765.1"/>
    <property type="molecule type" value="Genomic_DNA"/>
</dbReference>
<dbReference type="PIR" id="S44892">
    <property type="entry name" value="S44892"/>
</dbReference>
<dbReference type="RefSeq" id="NP_498683.1">
    <property type="nucleotide sequence ID" value="NM_066282.1"/>
</dbReference>
<dbReference type="PaxDb" id="6239-ZK112.4"/>
<dbReference type="EnsemblMetazoa" id="ZK112.4.1">
    <property type="protein sequence ID" value="ZK112.4.1"/>
    <property type="gene ID" value="WBGene00022660"/>
</dbReference>
<dbReference type="GeneID" id="191227"/>
<dbReference type="KEGG" id="cel:CELE_ZK112.4"/>
<dbReference type="UCSC" id="ZK112.4">
    <property type="organism name" value="c. elegans"/>
</dbReference>
<dbReference type="AGR" id="WB:WBGene00022660"/>
<dbReference type="CTD" id="191227"/>
<dbReference type="WormBase" id="ZK112.4">
    <property type="protein sequence ID" value="CE00375"/>
    <property type="gene ID" value="WBGene00022660"/>
</dbReference>
<dbReference type="HOGENOM" id="CLU_2308570_0_0_1"/>
<dbReference type="InParanoid" id="P34613"/>
<dbReference type="PRO" id="PR:P34613"/>
<dbReference type="Proteomes" id="UP000001940">
    <property type="component" value="Chromosome III"/>
</dbReference>
<dbReference type="Bgee" id="WBGene00022660">
    <property type="expression patterns" value="Expressed in pharyngeal muscle cell (C elegans) and 1 other cell type or tissue"/>
</dbReference>
<proteinExistence type="predicted"/>
<organism>
    <name type="scientific">Caenorhabditis elegans</name>
    <dbReference type="NCBI Taxonomy" id="6239"/>
    <lineage>
        <taxon>Eukaryota</taxon>
        <taxon>Metazoa</taxon>
        <taxon>Ecdysozoa</taxon>
        <taxon>Nematoda</taxon>
        <taxon>Chromadorea</taxon>
        <taxon>Rhabditida</taxon>
        <taxon>Rhabditina</taxon>
        <taxon>Rhabditomorpha</taxon>
        <taxon>Rhabditoidea</taxon>
        <taxon>Rhabditidae</taxon>
        <taxon>Peloderinae</taxon>
        <taxon>Caenorhabditis</taxon>
    </lineage>
</organism>
<keyword id="KW-1185">Reference proteome</keyword>
<gene>
    <name type="ORF">ZK112.4</name>
</gene>
<protein>
    <recommendedName>
        <fullName>Uncharacterized protein ZK112.4</fullName>
    </recommendedName>
</protein>
<accession>P34613</accession>
<sequence length="100" mass="11248">MTADDFIETSERSATAEEGARARANFRLVSLAFQKETDSSLFLTLSQCHIELGGLEKHCRGRIERKRGREALRLGPGTKYNCPFPIVSRLDSVSLLFEED</sequence>
<feature type="chain" id="PRO_0000065501" description="Uncharacterized protein ZK112.4">
    <location>
        <begin position="1"/>
        <end position="100"/>
    </location>
</feature>
<name>YOG4_CAEEL</name>